<feature type="chain" id="PRO_1000192769" description="LexA repressor">
    <location>
        <begin position="1"/>
        <end position="202"/>
    </location>
</feature>
<feature type="DNA-binding region" description="H-T-H motif" evidence="1">
    <location>
        <begin position="28"/>
        <end position="48"/>
    </location>
</feature>
<feature type="active site" description="For autocatalytic cleavage activity" evidence="1">
    <location>
        <position position="119"/>
    </location>
</feature>
<feature type="active site" description="For autocatalytic cleavage activity" evidence="1">
    <location>
        <position position="156"/>
    </location>
</feature>
<feature type="site" description="Cleavage; by autolysis" evidence="1">
    <location>
        <begin position="84"/>
        <end position="85"/>
    </location>
</feature>
<protein>
    <recommendedName>
        <fullName evidence="1">LexA repressor</fullName>
        <ecNumber evidence="1">3.4.21.88</ecNumber>
    </recommendedName>
</protein>
<proteinExistence type="inferred from homology"/>
<sequence length="202" mass="22358">MKALTARQQEVFDLIRDHISQTGMPPTRAEIAQRLGFRSPNAAEEHLKALARKGVIEIVSGASRGIRLLQEEEEGLPLVGRVAAGEPLLAQQHIEGHYQVDPSLFKPNADFLLRVSGMSMKDIGIMDGDLLAVHKTQDVRNGQVVVARIDDEVTVKRLKKQGNKVELLPENSEFKPIVVDLRQQSFTIEGLAVGVIRNGDWL</sequence>
<gene>
    <name evidence="1" type="primary">lexA</name>
    <name type="ordered locus">ECIAI1_4274</name>
</gene>
<name>LEXA_ECO8A</name>
<organism>
    <name type="scientific">Escherichia coli O8 (strain IAI1)</name>
    <dbReference type="NCBI Taxonomy" id="585034"/>
    <lineage>
        <taxon>Bacteria</taxon>
        <taxon>Pseudomonadati</taxon>
        <taxon>Pseudomonadota</taxon>
        <taxon>Gammaproteobacteria</taxon>
        <taxon>Enterobacterales</taxon>
        <taxon>Enterobacteriaceae</taxon>
        <taxon>Escherichia</taxon>
    </lineage>
</organism>
<keyword id="KW-0068">Autocatalytic cleavage</keyword>
<keyword id="KW-0227">DNA damage</keyword>
<keyword id="KW-0234">DNA repair</keyword>
<keyword id="KW-0235">DNA replication</keyword>
<keyword id="KW-0238">DNA-binding</keyword>
<keyword id="KW-0378">Hydrolase</keyword>
<keyword id="KW-0678">Repressor</keyword>
<keyword id="KW-0742">SOS response</keyword>
<keyword id="KW-0804">Transcription</keyword>
<keyword id="KW-0805">Transcription regulation</keyword>
<reference key="1">
    <citation type="journal article" date="2009" name="PLoS Genet.">
        <title>Organised genome dynamics in the Escherichia coli species results in highly diverse adaptive paths.</title>
        <authorList>
            <person name="Touchon M."/>
            <person name="Hoede C."/>
            <person name="Tenaillon O."/>
            <person name="Barbe V."/>
            <person name="Baeriswyl S."/>
            <person name="Bidet P."/>
            <person name="Bingen E."/>
            <person name="Bonacorsi S."/>
            <person name="Bouchier C."/>
            <person name="Bouvet O."/>
            <person name="Calteau A."/>
            <person name="Chiapello H."/>
            <person name="Clermont O."/>
            <person name="Cruveiller S."/>
            <person name="Danchin A."/>
            <person name="Diard M."/>
            <person name="Dossat C."/>
            <person name="Karoui M.E."/>
            <person name="Frapy E."/>
            <person name="Garry L."/>
            <person name="Ghigo J.M."/>
            <person name="Gilles A.M."/>
            <person name="Johnson J."/>
            <person name="Le Bouguenec C."/>
            <person name="Lescat M."/>
            <person name="Mangenot S."/>
            <person name="Martinez-Jehanne V."/>
            <person name="Matic I."/>
            <person name="Nassif X."/>
            <person name="Oztas S."/>
            <person name="Petit M.A."/>
            <person name="Pichon C."/>
            <person name="Rouy Z."/>
            <person name="Ruf C.S."/>
            <person name="Schneider D."/>
            <person name="Tourret J."/>
            <person name="Vacherie B."/>
            <person name="Vallenet D."/>
            <person name="Medigue C."/>
            <person name="Rocha E.P.C."/>
            <person name="Denamur E."/>
        </authorList>
    </citation>
    <scope>NUCLEOTIDE SEQUENCE [LARGE SCALE GENOMIC DNA]</scope>
    <source>
        <strain>IAI1</strain>
    </source>
</reference>
<dbReference type="EC" id="3.4.21.88" evidence="1"/>
<dbReference type="EMBL" id="CU928160">
    <property type="protein sequence ID" value="CAR01022.1"/>
    <property type="molecule type" value="Genomic_DNA"/>
</dbReference>
<dbReference type="RefSeq" id="WP_000646078.1">
    <property type="nucleotide sequence ID" value="NC_011741.1"/>
</dbReference>
<dbReference type="SMR" id="B7M7V6"/>
<dbReference type="MEROPS" id="S24.001"/>
<dbReference type="GeneID" id="93777788"/>
<dbReference type="KEGG" id="ecr:ECIAI1_4274"/>
<dbReference type="HOGENOM" id="CLU_066192_45_3_6"/>
<dbReference type="GO" id="GO:0003677">
    <property type="term" value="F:DNA binding"/>
    <property type="evidence" value="ECO:0007669"/>
    <property type="project" value="UniProtKB-UniRule"/>
</dbReference>
<dbReference type="GO" id="GO:0004252">
    <property type="term" value="F:serine-type endopeptidase activity"/>
    <property type="evidence" value="ECO:0007669"/>
    <property type="project" value="UniProtKB-UniRule"/>
</dbReference>
<dbReference type="GO" id="GO:0006281">
    <property type="term" value="P:DNA repair"/>
    <property type="evidence" value="ECO:0007669"/>
    <property type="project" value="UniProtKB-UniRule"/>
</dbReference>
<dbReference type="GO" id="GO:0006260">
    <property type="term" value="P:DNA replication"/>
    <property type="evidence" value="ECO:0007669"/>
    <property type="project" value="UniProtKB-UniRule"/>
</dbReference>
<dbReference type="GO" id="GO:0045892">
    <property type="term" value="P:negative regulation of DNA-templated transcription"/>
    <property type="evidence" value="ECO:0007669"/>
    <property type="project" value="UniProtKB-UniRule"/>
</dbReference>
<dbReference type="GO" id="GO:0006508">
    <property type="term" value="P:proteolysis"/>
    <property type="evidence" value="ECO:0007669"/>
    <property type="project" value="InterPro"/>
</dbReference>
<dbReference type="GO" id="GO:0009432">
    <property type="term" value="P:SOS response"/>
    <property type="evidence" value="ECO:0007669"/>
    <property type="project" value="UniProtKB-UniRule"/>
</dbReference>
<dbReference type="CDD" id="cd06529">
    <property type="entry name" value="S24_LexA-like"/>
    <property type="match status" value="1"/>
</dbReference>
<dbReference type="FunFam" id="1.10.10.10:FF:000009">
    <property type="entry name" value="LexA repressor"/>
    <property type="match status" value="1"/>
</dbReference>
<dbReference type="FunFam" id="2.10.109.10:FF:000001">
    <property type="entry name" value="LexA repressor"/>
    <property type="match status" value="1"/>
</dbReference>
<dbReference type="Gene3D" id="2.10.109.10">
    <property type="entry name" value="Umud Fragment, subunit A"/>
    <property type="match status" value="1"/>
</dbReference>
<dbReference type="Gene3D" id="1.10.10.10">
    <property type="entry name" value="Winged helix-like DNA-binding domain superfamily/Winged helix DNA-binding domain"/>
    <property type="match status" value="1"/>
</dbReference>
<dbReference type="HAMAP" id="MF_00015">
    <property type="entry name" value="LexA"/>
    <property type="match status" value="1"/>
</dbReference>
<dbReference type="InterPro" id="IPR006200">
    <property type="entry name" value="LexA"/>
</dbReference>
<dbReference type="InterPro" id="IPR039418">
    <property type="entry name" value="LexA-like"/>
</dbReference>
<dbReference type="InterPro" id="IPR036286">
    <property type="entry name" value="LexA/Signal_pep-like_sf"/>
</dbReference>
<dbReference type="InterPro" id="IPR006199">
    <property type="entry name" value="LexA_DNA-bd_dom"/>
</dbReference>
<dbReference type="InterPro" id="IPR050077">
    <property type="entry name" value="LexA_repressor"/>
</dbReference>
<dbReference type="InterPro" id="IPR006197">
    <property type="entry name" value="Peptidase_S24_LexA"/>
</dbReference>
<dbReference type="InterPro" id="IPR015927">
    <property type="entry name" value="Peptidase_S24_S26A/B/C"/>
</dbReference>
<dbReference type="InterPro" id="IPR036388">
    <property type="entry name" value="WH-like_DNA-bd_sf"/>
</dbReference>
<dbReference type="InterPro" id="IPR036390">
    <property type="entry name" value="WH_DNA-bd_sf"/>
</dbReference>
<dbReference type="NCBIfam" id="TIGR00498">
    <property type="entry name" value="lexA"/>
    <property type="match status" value="1"/>
</dbReference>
<dbReference type="PANTHER" id="PTHR33516">
    <property type="entry name" value="LEXA REPRESSOR"/>
    <property type="match status" value="1"/>
</dbReference>
<dbReference type="PANTHER" id="PTHR33516:SF2">
    <property type="entry name" value="LEXA REPRESSOR-RELATED"/>
    <property type="match status" value="1"/>
</dbReference>
<dbReference type="Pfam" id="PF01726">
    <property type="entry name" value="LexA_DNA_bind"/>
    <property type="match status" value="1"/>
</dbReference>
<dbReference type="Pfam" id="PF00717">
    <property type="entry name" value="Peptidase_S24"/>
    <property type="match status" value="1"/>
</dbReference>
<dbReference type="PRINTS" id="PR00726">
    <property type="entry name" value="LEXASERPTASE"/>
</dbReference>
<dbReference type="SUPFAM" id="SSF51306">
    <property type="entry name" value="LexA/Signal peptidase"/>
    <property type="match status" value="1"/>
</dbReference>
<dbReference type="SUPFAM" id="SSF46785">
    <property type="entry name" value="Winged helix' DNA-binding domain"/>
    <property type="match status" value="1"/>
</dbReference>
<accession>B7M7V6</accession>
<comment type="function">
    <text evidence="1">Represses a number of genes involved in the response to DNA damage (SOS response), including recA and lexA. Binds to the 16 bp palindromic sequence 5'-CTGTATATATATACAG-3'. In the presence of single-stranded DNA, RecA interacts with LexA causing an autocatalytic cleavage which disrupts the DNA-binding part of LexA, leading to derepression of the SOS regulon and eventually DNA repair.</text>
</comment>
<comment type="catalytic activity">
    <reaction evidence="1">
        <text>Hydrolysis of Ala-|-Gly bond in repressor LexA.</text>
        <dbReference type="EC" id="3.4.21.88"/>
    </reaction>
</comment>
<comment type="subunit">
    <text evidence="1">Homodimer.</text>
</comment>
<comment type="similarity">
    <text evidence="1">Belongs to the peptidase S24 family.</text>
</comment>
<evidence type="ECO:0000255" key="1">
    <source>
        <dbReference type="HAMAP-Rule" id="MF_00015"/>
    </source>
</evidence>